<organism>
    <name type="scientific">Arabidopsis thaliana</name>
    <name type="common">Mouse-ear cress</name>
    <dbReference type="NCBI Taxonomy" id="3702"/>
    <lineage>
        <taxon>Eukaryota</taxon>
        <taxon>Viridiplantae</taxon>
        <taxon>Streptophyta</taxon>
        <taxon>Embryophyta</taxon>
        <taxon>Tracheophyta</taxon>
        <taxon>Spermatophyta</taxon>
        <taxon>Magnoliopsida</taxon>
        <taxon>eudicotyledons</taxon>
        <taxon>Gunneridae</taxon>
        <taxon>Pentapetalae</taxon>
        <taxon>rosids</taxon>
        <taxon>malvids</taxon>
        <taxon>Brassicales</taxon>
        <taxon>Brassicaceae</taxon>
        <taxon>Camelineae</taxon>
        <taxon>Arabidopsis</taxon>
    </lineage>
</organism>
<reference key="1">
    <citation type="journal article" date="2000" name="Nature">
        <title>Sequence and analysis of chromosome 1 of the plant Arabidopsis thaliana.</title>
        <authorList>
            <person name="Theologis A."/>
            <person name="Ecker J.R."/>
            <person name="Palm C.J."/>
            <person name="Federspiel N.A."/>
            <person name="Kaul S."/>
            <person name="White O."/>
            <person name="Alonso J."/>
            <person name="Altafi H."/>
            <person name="Araujo R."/>
            <person name="Bowman C.L."/>
            <person name="Brooks S.Y."/>
            <person name="Buehler E."/>
            <person name="Chan A."/>
            <person name="Chao Q."/>
            <person name="Chen H."/>
            <person name="Cheuk R.F."/>
            <person name="Chin C.W."/>
            <person name="Chung M.K."/>
            <person name="Conn L."/>
            <person name="Conway A.B."/>
            <person name="Conway A.R."/>
            <person name="Creasy T.H."/>
            <person name="Dewar K."/>
            <person name="Dunn P."/>
            <person name="Etgu P."/>
            <person name="Feldblyum T.V."/>
            <person name="Feng J.-D."/>
            <person name="Fong B."/>
            <person name="Fujii C.Y."/>
            <person name="Gill J.E."/>
            <person name="Goldsmith A.D."/>
            <person name="Haas B."/>
            <person name="Hansen N.F."/>
            <person name="Hughes B."/>
            <person name="Huizar L."/>
            <person name="Hunter J.L."/>
            <person name="Jenkins J."/>
            <person name="Johnson-Hopson C."/>
            <person name="Khan S."/>
            <person name="Khaykin E."/>
            <person name="Kim C.J."/>
            <person name="Koo H.L."/>
            <person name="Kremenetskaia I."/>
            <person name="Kurtz D.B."/>
            <person name="Kwan A."/>
            <person name="Lam B."/>
            <person name="Langin-Hooper S."/>
            <person name="Lee A."/>
            <person name="Lee J.M."/>
            <person name="Lenz C.A."/>
            <person name="Li J.H."/>
            <person name="Li Y.-P."/>
            <person name="Lin X."/>
            <person name="Liu S.X."/>
            <person name="Liu Z.A."/>
            <person name="Luros J.S."/>
            <person name="Maiti R."/>
            <person name="Marziali A."/>
            <person name="Militscher J."/>
            <person name="Miranda M."/>
            <person name="Nguyen M."/>
            <person name="Nierman W.C."/>
            <person name="Osborne B.I."/>
            <person name="Pai G."/>
            <person name="Peterson J."/>
            <person name="Pham P.K."/>
            <person name="Rizzo M."/>
            <person name="Rooney T."/>
            <person name="Rowley D."/>
            <person name="Sakano H."/>
            <person name="Salzberg S.L."/>
            <person name="Schwartz J.R."/>
            <person name="Shinn P."/>
            <person name="Southwick A.M."/>
            <person name="Sun H."/>
            <person name="Tallon L.J."/>
            <person name="Tambunga G."/>
            <person name="Toriumi M.J."/>
            <person name="Town C.D."/>
            <person name="Utterback T."/>
            <person name="Van Aken S."/>
            <person name="Vaysberg M."/>
            <person name="Vysotskaia V.S."/>
            <person name="Walker M."/>
            <person name="Wu D."/>
            <person name="Yu G."/>
            <person name="Fraser C.M."/>
            <person name="Venter J.C."/>
            <person name="Davis R.W."/>
        </authorList>
    </citation>
    <scope>NUCLEOTIDE SEQUENCE [LARGE SCALE GENOMIC DNA]</scope>
    <source>
        <strain>cv. Columbia</strain>
    </source>
</reference>
<reference key="2">
    <citation type="journal article" date="2017" name="Plant J.">
        <title>Araport11: a complete reannotation of the Arabidopsis thaliana reference genome.</title>
        <authorList>
            <person name="Cheng C.Y."/>
            <person name="Krishnakumar V."/>
            <person name="Chan A.P."/>
            <person name="Thibaud-Nissen F."/>
            <person name="Schobel S."/>
            <person name="Town C.D."/>
        </authorList>
    </citation>
    <scope>GENOME REANNOTATION</scope>
    <source>
        <strain>cv. Columbia</strain>
    </source>
</reference>
<reference key="3">
    <citation type="journal article" date="2002" name="Nucleic Acids Res.">
        <title>Analysis of histone acetyltransferase and histone deacetylase families of Arabidopsis thaliana suggests functional diversification of chromatin modification among multicellular eukaryotes.</title>
        <authorList>
            <person name="Pandey R."/>
            <person name="Mueller A."/>
            <person name="Napoli C.A."/>
            <person name="Selinger D.A."/>
            <person name="Pikaard C.S."/>
            <person name="Richards E.J."/>
            <person name="Bender J."/>
            <person name="Mount D.W."/>
            <person name="Jorgensen R.A."/>
        </authorList>
    </citation>
    <scope>GENE FAMILY</scope>
    <scope>NOMENCLATURE</scope>
</reference>
<reference key="4">
    <citation type="journal article" date="2010" name="Plant Physiol.">
        <title>The Arabidopsis BET bromodomain factor GTE4 is involved in maintenance of the mitotic cell cycle during plant development.</title>
        <authorList>
            <person name="Airoldi C.A."/>
            <person name="Rovere F.D."/>
            <person name="Falasca G."/>
            <person name="Marino G."/>
            <person name="Kooiker M."/>
            <person name="Altamura M.M."/>
            <person name="Citterio S."/>
            <person name="Kater M.M."/>
        </authorList>
    </citation>
    <scope>FUNCTION</scope>
    <scope>DISRUPTION PHENOTYPE</scope>
    <scope>TISSUE SPECIFICITY</scope>
</reference>
<reference key="5">
    <citation type="journal article" date="2010" name="Plant Signal. Behav.">
        <title>The Arabidopsis BET bromodomain factor GTE4 regulates the mitotic cell cycle.</title>
        <authorList>
            <person name="Della Rovere F."/>
            <person name="Airoldi C.A."/>
            <person name="Falasca G."/>
            <person name="Ghiani A."/>
            <person name="Fattorini L."/>
            <person name="Citterio S."/>
            <person name="Kater M."/>
            <person name="Altamura M.M."/>
        </authorList>
    </citation>
    <scope>FUNCTION</scope>
    <scope>DISRUPTION PHENOTYPE</scope>
</reference>
<sequence length="766" mass="84095">MASEPVNGGEGIDGAREKQIIKVYKRKGKGQRKQSSFFALEAAIEKPEGLLENENDNNDVSPAETLAPEFEDPIVVVKNSIEEAALGTNSHGDKNLTEAPSENLPGDDSDKVIDKPLVEAFSQAQPQDDASLAAMDKSEEVPSQIPKAQDDVNTVVVDENSIKEPPKSLAQEDVTTVIVDKNPIEAPSQTLSLEDGDTLVVDKNPIEVSSEEDVHVIDADNLIKEAHPENFVERDTTDAQQPAGLTSDSAHATAAGSMPMEEDADGRIRIHVASTTKQQKEEIRKKLEDQLNVVRGMVKKIEDKEGEIGAYNDSRVLINTGINNGGGRILSGFASAGLPREVIRAPRPVNQLSISVLENTQGVNEHVEKEKRTPKANQFYRNSEFLLGDKLPPAESNKKSKSSSKKQGGDVGHGFGAGTKVFKNCSALLERLMKHKHGWVFNAPVDVKGLGLLDYYTIIEHPMDLGTIKSALMKNLYKSPREFAEDVRLTFHNAMTYNPEGQDVHLMAVTLLQIFEERWAVIEADYNREMRFVTGYEMNLPTPTMRSRLGPTMPPPPINVRNTIDRADWSNRQPTTTPGRTPTSATPSGRTPALKKPKANEPNKRDMTYEEKQKLSGHLQNLPPDKLDAIVQIVNKRNTAVKLRDEEIEVDIDSVDPETLWELDRFVTNYKKGLSKKKRKAELAIQARAEAERNSQQQMAPAPAAHEFSREGGNTAKKTLPTPLPSQVEKQNNETSRSSSSSSSSSSSSSSDSDSDSSSSSGSDQT</sequence>
<proteinExistence type="evidence at transcript level"/>
<comment type="function">
    <text evidence="4 5">Involved in the activation and maintenance of cell division in the meristems and by this controls cell numbers in differentiated organs. Its action in cell cycle regulation may be directed through the RB-E2F pathway.</text>
</comment>
<comment type="subcellular location">
    <subcellularLocation>
        <location evidence="6">Nucleus</location>
    </subcellularLocation>
</comment>
<comment type="tissue specificity">
    <text evidence="4">Ubiquitously expressed.</text>
</comment>
<comment type="domain">
    <text>The NET domain could serve as an interface to localize different proteins or complexes to chromatin.</text>
</comment>
<comment type="disruption phenotype">
    <text evidence="4 5">Cell numbers are significantly reduced in most of the organs. Cell cycle reactivation is delayed in germinating seeds, and a premature switch from mitosis to endoreduplication occurs. Furthermore, a partial loss of root quiescent center (QC) identity is observed.</text>
</comment>
<keyword id="KW-0103">Bromodomain</keyword>
<keyword id="KW-0539">Nucleus</keyword>
<keyword id="KW-1185">Reference proteome</keyword>
<keyword id="KW-0804">Transcription</keyword>
<keyword id="KW-0805">Transcription regulation</keyword>
<dbReference type="EMBL" id="AC025290">
    <property type="protein sequence ID" value="AAF80220.1"/>
    <property type="molecule type" value="Genomic_DNA"/>
</dbReference>
<dbReference type="EMBL" id="CP002684">
    <property type="protein sequence ID" value="AEE27964.1"/>
    <property type="molecule type" value="Genomic_DNA"/>
</dbReference>
<dbReference type="EMBL" id="CP002684">
    <property type="protein sequence ID" value="AEE27965.1"/>
    <property type="molecule type" value="Genomic_DNA"/>
</dbReference>
<dbReference type="EMBL" id="CP002684">
    <property type="protein sequence ID" value="AEE27966.1"/>
    <property type="molecule type" value="Genomic_DNA"/>
</dbReference>
<dbReference type="EMBL" id="CP002684">
    <property type="protein sequence ID" value="ANM60626.1"/>
    <property type="molecule type" value="Genomic_DNA"/>
</dbReference>
<dbReference type="PIR" id="A86198">
    <property type="entry name" value="A86198"/>
</dbReference>
<dbReference type="RefSeq" id="NP_001184922.1">
    <property type="nucleotide sequence ID" value="NM_001197993.2"/>
</dbReference>
<dbReference type="RefSeq" id="NP_001318932.1">
    <property type="nucleotide sequence ID" value="NM_001331622.1"/>
</dbReference>
<dbReference type="RefSeq" id="NP_172113.1">
    <property type="nucleotide sequence ID" value="NM_100505.3"/>
</dbReference>
<dbReference type="RefSeq" id="NP_849601.1">
    <property type="nucleotide sequence ID" value="NM_179270.2"/>
</dbReference>
<dbReference type="SMR" id="Q9LNC4"/>
<dbReference type="FunCoup" id="Q9LNC4">
    <property type="interactions" value="2226"/>
</dbReference>
<dbReference type="STRING" id="3702.Q9LNC4"/>
<dbReference type="GlyGen" id="Q9LNC4">
    <property type="glycosylation" value="1 site"/>
</dbReference>
<dbReference type="iPTMnet" id="Q9LNC4"/>
<dbReference type="PaxDb" id="3702-AT1G06230.1"/>
<dbReference type="ProteomicsDB" id="247341"/>
<dbReference type="EnsemblPlants" id="AT1G06230.1">
    <property type="protein sequence ID" value="AT1G06230.1"/>
    <property type="gene ID" value="AT1G06230"/>
</dbReference>
<dbReference type="EnsemblPlants" id="AT1G06230.2">
    <property type="protein sequence ID" value="AT1G06230.2"/>
    <property type="gene ID" value="AT1G06230"/>
</dbReference>
<dbReference type="EnsemblPlants" id="AT1G06230.3">
    <property type="protein sequence ID" value="AT1G06230.3"/>
    <property type="gene ID" value="AT1G06230"/>
</dbReference>
<dbReference type="EnsemblPlants" id="AT1G06230.4">
    <property type="protein sequence ID" value="AT1G06230.4"/>
    <property type="gene ID" value="AT1G06230"/>
</dbReference>
<dbReference type="GeneID" id="837133"/>
<dbReference type="Gramene" id="AT1G06230.1">
    <property type="protein sequence ID" value="AT1G06230.1"/>
    <property type="gene ID" value="AT1G06230"/>
</dbReference>
<dbReference type="Gramene" id="AT1G06230.2">
    <property type="protein sequence ID" value="AT1G06230.2"/>
    <property type="gene ID" value="AT1G06230"/>
</dbReference>
<dbReference type="Gramene" id="AT1G06230.3">
    <property type="protein sequence ID" value="AT1G06230.3"/>
    <property type="gene ID" value="AT1G06230"/>
</dbReference>
<dbReference type="Gramene" id="AT1G06230.4">
    <property type="protein sequence ID" value="AT1G06230.4"/>
    <property type="gene ID" value="AT1G06230"/>
</dbReference>
<dbReference type="KEGG" id="ath:AT1G06230"/>
<dbReference type="Araport" id="AT1G06230"/>
<dbReference type="TAIR" id="AT1G06230">
    <property type="gene designation" value="GTE4"/>
</dbReference>
<dbReference type="eggNOG" id="KOG1474">
    <property type="taxonomic scope" value="Eukaryota"/>
</dbReference>
<dbReference type="HOGENOM" id="CLU_009580_2_0_1"/>
<dbReference type="InParanoid" id="Q9LNC4"/>
<dbReference type="OMA" id="MVTHMSA"/>
<dbReference type="PhylomeDB" id="Q9LNC4"/>
<dbReference type="CD-CODE" id="4299E36E">
    <property type="entry name" value="Nucleolus"/>
</dbReference>
<dbReference type="PRO" id="PR:Q9LNC4"/>
<dbReference type="Proteomes" id="UP000006548">
    <property type="component" value="Chromosome 1"/>
</dbReference>
<dbReference type="ExpressionAtlas" id="Q9LNC4">
    <property type="expression patterns" value="baseline and differential"/>
</dbReference>
<dbReference type="GO" id="GO:0005634">
    <property type="term" value="C:nucleus"/>
    <property type="evidence" value="ECO:0007669"/>
    <property type="project" value="UniProtKB-SubCell"/>
</dbReference>
<dbReference type="GO" id="GO:0009294">
    <property type="term" value="P:DNA-mediated transformation"/>
    <property type="evidence" value="ECO:0000315"/>
    <property type="project" value="TAIR"/>
</dbReference>
<dbReference type="GO" id="GO:0045931">
    <property type="term" value="P:positive regulation of mitotic cell cycle"/>
    <property type="evidence" value="ECO:0000315"/>
    <property type="project" value="TAIR"/>
</dbReference>
<dbReference type="GO" id="GO:0048364">
    <property type="term" value="P:root development"/>
    <property type="evidence" value="ECO:0000315"/>
    <property type="project" value="TAIR"/>
</dbReference>
<dbReference type="CDD" id="cd05506">
    <property type="entry name" value="Bromo_plant1"/>
    <property type="match status" value="1"/>
</dbReference>
<dbReference type="FunFam" id="1.20.1270.220:FF:000002">
    <property type="entry name" value="Transcription factor GTE4"/>
    <property type="match status" value="1"/>
</dbReference>
<dbReference type="FunFam" id="1.20.920.10:FF:000050">
    <property type="entry name" value="Transcription factor GTE4"/>
    <property type="match status" value="1"/>
</dbReference>
<dbReference type="Gene3D" id="1.20.1270.220">
    <property type="match status" value="1"/>
</dbReference>
<dbReference type="Gene3D" id="1.20.920.10">
    <property type="entry name" value="Bromodomain-like"/>
    <property type="match status" value="1"/>
</dbReference>
<dbReference type="InterPro" id="IPR001487">
    <property type="entry name" value="Bromodomain"/>
</dbReference>
<dbReference type="InterPro" id="IPR036427">
    <property type="entry name" value="Bromodomain-like_sf"/>
</dbReference>
<dbReference type="InterPro" id="IPR037377">
    <property type="entry name" value="GTE_bromo"/>
</dbReference>
<dbReference type="InterPro" id="IPR027353">
    <property type="entry name" value="NET_dom"/>
</dbReference>
<dbReference type="InterPro" id="IPR038336">
    <property type="entry name" value="NET_sf"/>
</dbReference>
<dbReference type="PANTHER" id="PTHR45926">
    <property type="entry name" value="OSJNBA0053K19.4 PROTEIN"/>
    <property type="match status" value="1"/>
</dbReference>
<dbReference type="Pfam" id="PF17035">
    <property type="entry name" value="BET"/>
    <property type="match status" value="1"/>
</dbReference>
<dbReference type="Pfam" id="PF00439">
    <property type="entry name" value="Bromodomain"/>
    <property type="match status" value="1"/>
</dbReference>
<dbReference type="PRINTS" id="PR00503">
    <property type="entry name" value="BROMODOMAIN"/>
</dbReference>
<dbReference type="SMART" id="SM00297">
    <property type="entry name" value="BROMO"/>
    <property type="match status" value="1"/>
</dbReference>
<dbReference type="SUPFAM" id="SSF47370">
    <property type="entry name" value="Bromodomain"/>
    <property type="match status" value="1"/>
</dbReference>
<dbReference type="PROSITE" id="PS50014">
    <property type="entry name" value="BROMODOMAIN_2"/>
    <property type="match status" value="1"/>
</dbReference>
<dbReference type="PROSITE" id="PS51525">
    <property type="entry name" value="NET"/>
    <property type="match status" value="1"/>
</dbReference>
<name>GTE4_ARATH</name>
<feature type="chain" id="PRO_0000406336" description="Transcription factor GTE4">
    <location>
        <begin position="1"/>
        <end position="766"/>
    </location>
</feature>
<feature type="domain" description="Bromo" evidence="1">
    <location>
        <begin position="416"/>
        <end position="522"/>
    </location>
</feature>
<feature type="domain" description="NET" evidence="2">
    <location>
        <begin position="597"/>
        <end position="678"/>
    </location>
</feature>
<feature type="region of interest" description="Disordered" evidence="3">
    <location>
        <begin position="87"/>
        <end position="108"/>
    </location>
</feature>
<feature type="region of interest" description="Disordered" evidence="3">
    <location>
        <begin position="234"/>
        <end position="262"/>
    </location>
</feature>
<feature type="region of interest" description="Disordered" evidence="3">
    <location>
        <begin position="388"/>
        <end position="412"/>
    </location>
</feature>
<feature type="region of interest" description="Disordered" evidence="3">
    <location>
        <begin position="544"/>
        <end position="606"/>
    </location>
</feature>
<feature type="region of interest" description="Disordered" evidence="3">
    <location>
        <begin position="687"/>
        <end position="766"/>
    </location>
</feature>
<feature type="compositionally biased region" description="Polar residues" evidence="3">
    <location>
        <begin position="238"/>
        <end position="250"/>
    </location>
</feature>
<feature type="compositionally biased region" description="Low complexity" evidence="3">
    <location>
        <begin position="574"/>
        <end position="589"/>
    </location>
</feature>
<feature type="compositionally biased region" description="Low complexity" evidence="3">
    <location>
        <begin position="736"/>
        <end position="766"/>
    </location>
</feature>
<protein>
    <recommendedName>
        <fullName>Transcription factor GTE4</fullName>
    </recommendedName>
    <alternativeName>
        <fullName>Bromodomain-containing protein GTE4</fullName>
    </alternativeName>
    <alternativeName>
        <fullName>Protein GLOBAL TRANSCRIPTION FACTOR GROUP E4</fullName>
    </alternativeName>
</protein>
<gene>
    <name type="primary">GTE4</name>
    <name type="ordered locus">At1g06230</name>
    <name type="ORF">F9P14.9</name>
</gene>
<evidence type="ECO:0000255" key="1">
    <source>
        <dbReference type="PROSITE-ProRule" id="PRU00035"/>
    </source>
</evidence>
<evidence type="ECO:0000255" key="2">
    <source>
        <dbReference type="PROSITE-ProRule" id="PRU00857"/>
    </source>
</evidence>
<evidence type="ECO:0000256" key="3">
    <source>
        <dbReference type="SAM" id="MobiDB-lite"/>
    </source>
</evidence>
<evidence type="ECO:0000269" key="4">
    <source>
    </source>
</evidence>
<evidence type="ECO:0000269" key="5">
    <source>
    </source>
</evidence>
<evidence type="ECO:0000305" key="6"/>
<accession>Q9LNC4</accession>